<sequence length="114" mass="12638">MSQAEMSTCSMPHTQRVFQEAVRNGNTKELHSLLQNMTNCEFNVNSFGPEGQTALHQSVIDGNLELVKLLVKFGADIRLANRDGWSALHIAAYGGHQDIVLYLITKAKYSSSSR</sequence>
<protein>
    <recommendedName>
        <fullName>Notch-regulated ankyrin repeat-containing protein</fullName>
    </recommendedName>
</protein>
<organism>
    <name type="scientific">Xenopus laevis</name>
    <name type="common">African clawed frog</name>
    <dbReference type="NCBI Taxonomy" id="8355"/>
    <lineage>
        <taxon>Eukaryota</taxon>
        <taxon>Metazoa</taxon>
        <taxon>Chordata</taxon>
        <taxon>Craniata</taxon>
        <taxon>Vertebrata</taxon>
        <taxon>Euteleostomi</taxon>
        <taxon>Amphibia</taxon>
        <taxon>Batrachia</taxon>
        <taxon>Anura</taxon>
        <taxon>Pipoidea</taxon>
        <taxon>Pipidae</taxon>
        <taxon>Xenopodinae</taxon>
        <taxon>Xenopus</taxon>
        <taxon>Xenopus</taxon>
    </lineage>
</organism>
<name>NRARP_XENLA</name>
<comment type="function">
    <text evidence="1 2 3">Promotes loss of intracellular domain (ICD) of Notch1 in embryos. By down-regulating ICD levels, could function as a negative feedback regulator of Notch signaling that attenuates ICD-mediated transcription (PubMed:11485984). Involved in angiogenesis. May be involved in somitogenesis (By similarity).</text>
</comment>
<comment type="subunit">
    <text evidence="3">Forms a ternary complex with the intracellular domain (ICD) of notch1 and rbpj/suh.</text>
</comment>
<comment type="developmental stage">
    <text evidence="3">Detected at late gastrulae stages within the prospective trigeminal placodes, followed soon in the posterior neural plate where the differentiation of primary neurons occurs. Expression is associated with neurogenesis throughout neural development. Expressed in a ring of tissue that will form the early somites in gastrulating embryos and in a region of paraxial mesoderm called the tailbud domain, which grows out to give rise to somites in the tail in later-stage embryos.</text>
</comment>
<comment type="induction">
    <text evidence="3">By Notch signaling via a CBF1/Su(H)/Lag-1 (CSL)-dependent pathway.</text>
</comment>
<comment type="similarity">
    <text evidence="4">Belongs to the NRARP family.</text>
</comment>
<reference key="1">
    <citation type="submission" date="2004-10" db="EMBL/GenBank/DDBJ databases">
        <authorList>
            <consortium name="NIH - Xenopus Gene Collection (XGC) project"/>
        </authorList>
    </citation>
    <scope>NUCLEOTIDE SEQUENCE [LARGE SCALE MRNA]</scope>
    <source>
        <tissue>Embryo</tissue>
    </source>
</reference>
<reference key="2">
    <citation type="journal article" date="2001" name="Genes Dev.">
        <title>Nrarp is a novel intracellular component of the Notch signaling pathway.</title>
        <authorList>
            <person name="Lamar E."/>
            <person name="Deblandre G."/>
            <person name="Wettstein D."/>
            <person name="Gawantka V."/>
            <person name="Pollet N."/>
            <person name="Niehrs C."/>
            <person name="Kintner C."/>
        </authorList>
    </citation>
    <scope>FUNCTION</scope>
    <scope>INDUCTION</scope>
    <scope>SUBUNIT</scope>
    <scope>DEVELOPMENTAL STAGE</scope>
</reference>
<dbReference type="EMBL" id="BC084778">
    <property type="protein sequence ID" value="AAH84778.1"/>
    <property type="molecule type" value="mRNA"/>
</dbReference>
<dbReference type="RefSeq" id="NP_001088453.1">
    <property type="nucleotide sequence ID" value="NM_001094984.1"/>
</dbReference>
<dbReference type="SMR" id="Q5U5A6"/>
<dbReference type="BioGRID" id="105397">
    <property type="interactions" value="1"/>
</dbReference>
<dbReference type="IntAct" id="Q5U5A6">
    <property type="interactions" value="1"/>
</dbReference>
<dbReference type="DNASU" id="495317"/>
<dbReference type="GeneID" id="495317"/>
<dbReference type="KEGG" id="xla:108698141"/>
<dbReference type="KEGG" id="xla:495317"/>
<dbReference type="AGR" id="Xenbase:XB-GENE-996962"/>
<dbReference type="CTD" id="108698141"/>
<dbReference type="CTD" id="495317"/>
<dbReference type="Xenbase" id="XB-GENE-996962">
    <property type="gene designation" value="nrarp.S"/>
</dbReference>
<dbReference type="OMA" id="HRCCING"/>
<dbReference type="OrthoDB" id="5314041at2759"/>
<dbReference type="Proteomes" id="UP000186698">
    <property type="component" value="Chromosome 8L"/>
</dbReference>
<dbReference type="Proteomes" id="UP000186698">
    <property type="component" value="Chromosome 8S"/>
</dbReference>
<dbReference type="Bgee" id="108698141">
    <property type="expression patterns" value="Expressed in gastrula and 19 other cell types or tissues"/>
</dbReference>
<dbReference type="GO" id="GO:0005737">
    <property type="term" value="C:cytoplasm"/>
    <property type="evidence" value="ECO:0007669"/>
    <property type="project" value="TreeGrafter"/>
</dbReference>
<dbReference type="GO" id="GO:0004857">
    <property type="term" value="F:enzyme inhibitor activity"/>
    <property type="evidence" value="ECO:0007669"/>
    <property type="project" value="TreeGrafter"/>
</dbReference>
<dbReference type="GO" id="GO:0019208">
    <property type="term" value="F:phosphatase regulator activity"/>
    <property type="evidence" value="ECO:0007669"/>
    <property type="project" value="TreeGrafter"/>
</dbReference>
<dbReference type="GO" id="GO:0007219">
    <property type="term" value="P:Notch signaling pathway"/>
    <property type="evidence" value="ECO:0000250"/>
    <property type="project" value="UniProtKB"/>
</dbReference>
<dbReference type="FunFam" id="1.25.40.20:FF:000085">
    <property type="entry name" value="Notch-regulated ankyrin repeat-containing protein A"/>
    <property type="match status" value="1"/>
</dbReference>
<dbReference type="Gene3D" id="1.25.40.20">
    <property type="entry name" value="Ankyrin repeat-containing domain"/>
    <property type="match status" value="1"/>
</dbReference>
<dbReference type="InterPro" id="IPR002110">
    <property type="entry name" value="Ankyrin_rpt"/>
</dbReference>
<dbReference type="InterPro" id="IPR036770">
    <property type="entry name" value="Ankyrin_rpt-contain_sf"/>
</dbReference>
<dbReference type="InterPro" id="IPR051226">
    <property type="entry name" value="PP1_Regulatory_Subunit"/>
</dbReference>
<dbReference type="PANTHER" id="PTHR24179:SF21">
    <property type="entry name" value="MYOSIN BINDING SUBUNIT, ISOFORM O"/>
    <property type="match status" value="1"/>
</dbReference>
<dbReference type="PANTHER" id="PTHR24179">
    <property type="entry name" value="PROTEIN PHOSPHATASE 1 REGULATORY SUBUNIT 12"/>
    <property type="match status" value="1"/>
</dbReference>
<dbReference type="Pfam" id="PF12796">
    <property type="entry name" value="Ank_2"/>
    <property type="match status" value="1"/>
</dbReference>
<dbReference type="SMART" id="SM00248">
    <property type="entry name" value="ANK"/>
    <property type="match status" value="2"/>
</dbReference>
<dbReference type="SUPFAM" id="SSF48403">
    <property type="entry name" value="Ankyrin repeat"/>
    <property type="match status" value="1"/>
</dbReference>
<dbReference type="PROSITE" id="PS50297">
    <property type="entry name" value="ANK_REP_REGION"/>
    <property type="match status" value="1"/>
</dbReference>
<dbReference type="PROSITE" id="PS50088">
    <property type="entry name" value="ANK_REPEAT"/>
    <property type="match status" value="2"/>
</dbReference>
<keyword id="KW-0040">ANK repeat</keyword>
<keyword id="KW-0217">Developmental protein</keyword>
<keyword id="KW-0914">Notch signaling pathway</keyword>
<keyword id="KW-1185">Reference proteome</keyword>
<keyword id="KW-0677">Repeat</keyword>
<keyword id="KW-0804">Transcription</keyword>
<keyword id="KW-0805">Transcription regulation</keyword>
<proteinExistence type="evidence at protein level"/>
<evidence type="ECO:0000250" key="1">
    <source>
        <dbReference type="UniProtKB" id="Q7T3Y0"/>
    </source>
</evidence>
<evidence type="ECO:0000250" key="2">
    <source>
        <dbReference type="UniProtKB" id="Q91ZA8"/>
    </source>
</evidence>
<evidence type="ECO:0000269" key="3">
    <source>
    </source>
</evidence>
<evidence type="ECO:0000305" key="4"/>
<gene>
    <name type="primary">nrarp</name>
</gene>
<feature type="chain" id="PRO_0000325083" description="Notch-regulated ankyrin repeat-containing protein">
    <location>
        <begin position="1"/>
        <end position="114"/>
    </location>
</feature>
<feature type="repeat" description="ANK 1">
    <location>
        <begin position="50"/>
        <end position="79"/>
    </location>
</feature>
<feature type="repeat" description="ANK 2">
    <location>
        <begin position="83"/>
        <end position="112"/>
    </location>
</feature>
<accession>Q5U5A6</accession>